<proteinExistence type="evidence at protein level"/>
<name>RM32_MOUSE</name>
<comment type="function">
    <text evidence="2">Component of the mitochondrial large ribosomal subunit (mt-LSU). The mitochondrial ribosome (mitoribosome) is a large ribonucleoprotein complex responsible for the synthesis of proteins inside mitochondria.</text>
</comment>
<comment type="subunit">
    <text evidence="2">Component of the mitochondrial ribosome large subunit (39S) which comprises a 16S rRNA and about 50 distinct proteins.</text>
</comment>
<comment type="subcellular location">
    <subcellularLocation>
        <location evidence="2">Mitochondrion</location>
    </subcellularLocation>
</comment>
<comment type="PTM">
    <text evidence="1 4">MRPL32 precursor is processed by the m-AAA protease (composed of AFG3L2 and SPG7), which cleaves the N-terminal transit peptide (PubMed:16239145). Cleavage by the m-AAA protease takes place prior to assembly into the large subunit, an essential step for mitochondrial ribosome (mitoribosome) assembly (PubMed:16239145). Proper processing by the m-AAA protease is dependent on the zinc-binding region within the tightly folded C-terminal domain of MRPL32: zinc-dependent folding halts degradation initiated from the N-terminus and triggers the release of mature MRPL32 (By similarity).</text>
</comment>
<comment type="similarity">
    <text evidence="5">Belongs to the bacterial ribosomal protein bL32 family.</text>
</comment>
<comment type="sequence caution" evidence="5">
    <conflict type="erroneous initiation">
        <sequence resource="EMBL-CDS" id="AAK69482"/>
    </conflict>
</comment>
<dbReference type="EMBL" id="AB049650">
    <property type="protein sequence ID" value="BAB40855.1"/>
    <property type="molecule type" value="mRNA"/>
</dbReference>
<dbReference type="EMBL" id="AK002753">
    <property type="protein sequence ID" value="BAB22330.1"/>
    <property type="molecule type" value="mRNA"/>
</dbReference>
<dbReference type="EMBL" id="AF279255">
    <property type="protein sequence ID" value="AAK69482.1"/>
    <property type="status" value="ALT_INIT"/>
    <property type="molecule type" value="mRNA"/>
</dbReference>
<dbReference type="EMBL" id="BC052214">
    <property type="protein sequence ID" value="AAH52214.1"/>
    <property type="molecule type" value="mRNA"/>
</dbReference>
<dbReference type="CCDS" id="CCDS26249.1"/>
<dbReference type="RefSeq" id="NP_083547.1">
    <property type="nucleotide sequence ID" value="NM_029271.2"/>
</dbReference>
<dbReference type="SMR" id="Q9DCI9"/>
<dbReference type="BioGRID" id="217452">
    <property type="interactions" value="31"/>
</dbReference>
<dbReference type="ComplexPortal" id="CPX-5302">
    <property type="entry name" value="39S mitochondrial large ribosomal subunit"/>
</dbReference>
<dbReference type="FunCoup" id="Q9DCI9">
    <property type="interactions" value="1353"/>
</dbReference>
<dbReference type="STRING" id="10090.ENSMUSP00000152345"/>
<dbReference type="PhosphoSitePlus" id="Q9DCI9"/>
<dbReference type="PaxDb" id="10090-ENSMUSP00000015816"/>
<dbReference type="PeptideAtlas" id="Q9DCI9"/>
<dbReference type="ProteomicsDB" id="299830"/>
<dbReference type="Pumba" id="Q9DCI9"/>
<dbReference type="Antibodypedia" id="57638">
    <property type="antibodies" value="85 antibodies from 19 providers"/>
</dbReference>
<dbReference type="DNASU" id="75398"/>
<dbReference type="Ensembl" id="ENSMUST00000220621.2">
    <property type="protein sequence ID" value="ENSMUSP00000152345.2"/>
    <property type="gene ID" value="ENSMUSG00000015672.5"/>
</dbReference>
<dbReference type="GeneID" id="75398"/>
<dbReference type="KEGG" id="mmu:75398"/>
<dbReference type="UCSC" id="uc007pnj.1">
    <property type="organism name" value="mouse"/>
</dbReference>
<dbReference type="AGR" id="MGI:2137226"/>
<dbReference type="CTD" id="64983"/>
<dbReference type="MGI" id="MGI:2137226">
    <property type="gene designation" value="Mrpl32"/>
</dbReference>
<dbReference type="VEuPathDB" id="HostDB:ENSMUSG00000015672"/>
<dbReference type="eggNOG" id="KOG4080">
    <property type="taxonomic scope" value="Eukaryota"/>
</dbReference>
<dbReference type="GeneTree" id="ENSGT00390000014996"/>
<dbReference type="HOGENOM" id="CLU_116455_1_0_1"/>
<dbReference type="InParanoid" id="Q9DCI9"/>
<dbReference type="OMA" id="VLCPHCY"/>
<dbReference type="OrthoDB" id="2014905at2759"/>
<dbReference type="PhylomeDB" id="Q9DCI9"/>
<dbReference type="TreeFam" id="TF106139"/>
<dbReference type="Reactome" id="R-MMU-5389840">
    <property type="pathway name" value="Mitochondrial translation elongation"/>
</dbReference>
<dbReference type="Reactome" id="R-MMU-5419276">
    <property type="pathway name" value="Mitochondrial translation termination"/>
</dbReference>
<dbReference type="Reactome" id="R-MMU-9837999">
    <property type="pathway name" value="Mitochondrial protein degradation"/>
</dbReference>
<dbReference type="BioGRID-ORCS" id="75398">
    <property type="hits" value="18 hits in 78 CRISPR screens"/>
</dbReference>
<dbReference type="ChiTaRS" id="Mrpl32">
    <property type="organism name" value="mouse"/>
</dbReference>
<dbReference type="PRO" id="PR:Q9DCI9"/>
<dbReference type="Proteomes" id="UP000000589">
    <property type="component" value="Chromosome 13"/>
</dbReference>
<dbReference type="RNAct" id="Q9DCI9">
    <property type="molecule type" value="protein"/>
</dbReference>
<dbReference type="Bgee" id="ENSMUSG00000015672">
    <property type="expression patterns" value="Expressed in interventricular septum and 259 other cell types or tissues"/>
</dbReference>
<dbReference type="ExpressionAtlas" id="Q9DCI9">
    <property type="expression patterns" value="baseline and differential"/>
</dbReference>
<dbReference type="GO" id="GO:0005829">
    <property type="term" value="C:cytosol"/>
    <property type="evidence" value="ECO:0007669"/>
    <property type="project" value="UniProtKB-ARBA"/>
</dbReference>
<dbReference type="GO" id="GO:0005743">
    <property type="term" value="C:mitochondrial inner membrane"/>
    <property type="evidence" value="ECO:0000303"/>
    <property type="project" value="ComplexPortal"/>
</dbReference>
<dbReference type="GO" id="GO:0005762">
    <property type="term" value="C:mitochondrial large ribosomal subunit"/>
    <property type="evidence" value="ECO:0000250"/>
    <property type="project" value="UniProtKB"/>
</dbReference>
<dbReference type="GO" id="GO:0005739">
    <property type="term" value="C:mitochondrion"/>
    <property type="evidence" value="ECO:0007005"/>
    <property type="project" value="MGI"/>
</dbReference>
<dbReference type="GO" id="GO:0046872">
    <property type="term" value="F:metal ion binding"/>
    <property type="evidence" value="ECO:0007669"/>
    <property type="project" value="UniProtKB-KW"/>
</dbReference>
<dbReference type="GO" id="GO:0003735">
    <property type="term" value="F:structural constituent of ribosome"/>
    <property type="evidence" value="ECO:0000266"/>
    <property type="project" value="MGI"/>
</dbReference>
<dbReference type="GO" id="GO:0032543">
    <property type="term" value="P:mitochondrial translation"/>
    <property type="evidence" value="ECO:0000303"/>
    <property type="project" value="ComplexPortal"/>
</dbReference>
<dbReference type="GO" id="GO:0006412">
    <property type="term" value="P:translation"/>
    <property type="evidence" value="ECO:0000266"/>
    <property type="project" value="MGI"/>
</dbReference>
<dbReference type="InterPro" id="IPR051991">
    <property type="entry name" value="Mitoribosomal_protein_bL32"/>
</dbReference>
<dbReference type="InterPro" id="IPR002677">
    <property type="entry name" value="Ribosomal_bL32"/>
</dbReference>
<dbReference type="InterPro" id="IPR011332">
    <property type="entry name" value="Ribosomal_zn-bd"/>
</dbReference>
<dbReference type="PANTHER" id="PTHR21026">
    <property type="entry name" value="39S RIBOSOMAL PROTEIN L32, MITOCHONDRIAL"/>
    <property type="match status" value="1"/>
</dbReference>
<dbReference type="PANTHER" id="PTHR21026:SF2">
    <property type="entry name" value="LARGE RIBOSOMAL SUBUNIT PROTEIN BL32M"/>
    <property type="match status" value="1"/>
</dbReference>
<dbReference type="Pfam" id="PF01783">
    <property type="entry name" value="Ribosomal_L32p"/>
    <property type="match status" value="1"/>
</dbReference>
<dbReference type="SUPFAM" id="SSF57829">
    <property type="entry name" value="Zn-binding ribosomal proteins"/>
    <property type="match status" value="1"/>
</dbReference>
<sequence length="187" mass="21733">MAPSLLLLSLPWPVRPGPLQRCWELLQRQLQQSWSRFVSPPWAPALAVQRPSILTELAHDTCENKENSSFLDSIFWMAAPKNRRTIEVNRCRRRNPQKLIKIKNNIDICPECGHLKQKHVLCGYCYEKVRQETTKIRQQIGAQEGGPFRAPSVETMVLYTGEKPSEKDQGKRIVERNIKRPSWFTQN</sequence>
<evidence type="ECO:0000250" key="1">
    <source>
        <dbReference type="UniProtKB" id="P25348"/>
    </source>
</evidence>
<evidence type="ECO:0000250" key="2">
    <source>
        <dbReference type="UniProtKB" id="Q9BYC8"/>
    </source>
</evidence>
<evidence type="ECO:0000255" key="3"/>
<evidence type="ECO:0000269" key="4">
    <source>
    </source>
</evidence>
<evidence type="ECO:0000305" key="5"/>
<reference key="1">
    <citation type="journal article" date="2001" name="J. Biol. Chem.">
        <title>Structural compensation for the deficit of rRNA with proteins in the mammalian mitochondrial ribosome. Systematic analysis of protein components of the large ribosomal subunit from mammalian mitochondria.</title>
        <authorList>
            <person name="Suzuki T."/>
            <person name="Terasaki M."/>
            <person name="Takemoto-Hori C."/>
            <person name="Hanada T."/>
            <person name="Ueda T."/>
            <person name="Wada A."/>
            <person name="Watanabe K."/>
        </authorList>
    </citation>
    <scope>NUCLEOTIDE SEQUENCE [MRNA]</scope>
</reference>
<reference key="2">
    <citation type="journal article" date="2005" name="Science">
        <title>The transcriptional landscape of the mammalian genome.</title>
        <authorList>
            <person name="Carninci P."/>
            <person name="Kasukawa T."/>
            <person name="Katayama S."/>
            <person name="Gough J."/>
            <person name="Frith M.C."/>
            <person name="Maeda N."/>
            <person name="Oyama R."/>
            <person name="Ravasi T."/>
            <person name="Lenhard B."/>
            <person name="Wells C."/>
            <person name="Kodzius R."/>
            <person name="Shimokawa K."/>
            <person name="Bajic V.B."/>
            <person name="Brenner S.E."/>
            <person name="Batalov S."/>
            <person name="Forrest A.R."/>
            <person name="Zavolan M."/>
            <person name="Davis M.J."/>
            <person name="Wilming L.G."/>
            <person name="Aidinis V."/>
            <person name="Allen J.E."/>
            <person name="Ambesi-Impiombato A."/>
            <person name="Apweiler R."/>
            <person name="Aturaliya R.N."/>
            <person name="Bailey T.L."/>
            <person name="Bansal M."/>
            <person name="Baxter L."/>
            <person name="Beisel K.W."/>
            <person name="Bersano T."/>
            <person name="Bono H."/>
            <person name="Chalk A.M."/>
            <person name="Chiu K.P."/>
            <person name="Choudhary V."/>
            <person name="Christoffels A."/>
            <person name="Clutterbuck D.R."/>
            <person name="Crowe M.L."/>
            <person name="Dalla E."/>
            <person name="Dalrymple B.P."/>
            <person name="de Bono B."/>
            <person name="Della Gatta G."/>
            <person name="di Bernardo D."/>
            <person name="Down T."/>
            <person name="Engstrom P."/>
            <person name="Fagiolini M."/>
            <person name="Faulkner G."/>
            <person name="Fletcher C.F."/>
            <person name="Fukushima T."/>
            <person name="Furuno M."/>
            <person name="Futaki S."/>
            <person name="Gariboldi M."/>
            <person name="Georgii-Hemming P."/>
            <person name="Gingeras T.R."/>
            <person name="Gojobori T."/>
            <person name="Green R.E."/>
            <person name="Gustincich S."/>
            <person name="Harbers M."/>
            <person name="Hayashi Y."/>
            <person name="Hensch T.K."/>
            <person name="Hirokawa N."/>
            <person name="Hill D."/>
            <person name="Huminiecki L."/>
            <person name="Iacono M."/>
            <person name="Ikeo K."/>
            <person name="Iwama A."/>
            <person name="Ishikawa T."/>
            <person name="Jakt M."/>
            <person name="Kanapin A."/>
            <person name="Katoh M."/>
            <person name="Kawasawa Y."/>
            <person name="Kelso J."/>
            <person name="Kitamura H."/>
            <person name="Kitano H."/>
            <person name="Kollias G."/>
            <person name="Krishnan S.P."/>
            <person name="Kruger A."/>
            <person name="Kummerfeld S.K."/>
            <person name="Kurochkin I.V."/>
            <person name="Lareau L.F."/>
            <person name="Lazarevic D."/>
            <person name="Lipovich L."/>
            <person name="Liu J."/>
            <person name="Liuni S."/>
            <person name="McWilliam S."/>
            <person name="Madan Babu M."/>
            <person name="Madera M."/>
            <person name="Marchionni L."/>
            <person name="Matsuda H."/>
            <person name="Matsuzawa S."/>
            <person name="Miki H."/>
            <person name="Mignone F."/>
            <person name="Miyake S."/>
            <person name="Morris K."/>
            <person name="Mottagui-Tabar S."/>
            <person name="Mulder N."/>
            <person name="Nakano N."/>
            <person name="Nakauchi H."/>
            <person name="Ng P."/>
            <person name="Nilsson R."/>
            <person name="Nishiguchi S."/>
            <person name="Nishikawa S."/>
            <person name="Nori F."/>
            <person name="Ohara O."/>
            <person name="Okazaki Y."/>
            <person name="Orlando V."/>
            <person name="Pang K.C."/>
            <person name="Pavan W.J."/>
            <person name="Pavesi G."/>
            <person name="Pesole G."/>
            <person name="Petrovsky N."/>
            <person name="Piazza S."/>
            <person name="Reed J."/>
            <person name="Reid J.F."/>
            <person name="Ring B.Z."/>
            <person name="Ringwald M."/>
            <person name="Rost B."/>
            <person name="Ruan Y."/>
            <person name="Salzberg S.L."/>
            <person name="Sandelin A."/>
            <person name="Schneider C."/>
            <person name="Schoenbach C."/>
            <person name="Sekiguchi K."/>
            <person name="Semple C.A."/>
            <person name="Seno S."/>
            <person name="Sessa L."/>
            <person name="Sheng Y."/>
            <person name="Shibata Y."/>
            <person name="Shimada H."/>
            <person name="Shimada K."/>
            <person name="Silva D."/>
            <person name="Sinclair B."/>
            <person name="Sperling S."/>
            <person name="Stupka E."/>
            <person name="Sugiura K."/>
            <person name="Sultana R."/>
            <person name="Takenaka Y."/>
            <person name="Taki K."/>
            <person name="Tammoja K."/>
            <person name="Tan S.L."/>
            <person name="Tang S."/>
            <person name="Taylor M.S."/>
            <person name="Tegner J."/>
            <person name="Teichmann S.A."/>
            <person name="Ueda H.R."/>
            <person name="van Nimwegen E."/>
            <person name="Verardo R."/>
            <person name="Wei C.L."/>
            <person name="Yagi K."/>
            <person name="Yamanishi H."/>
            <person name="Zabarovsky E."/>
            <person name="Zhu S."/>
            <person name="Zimmer A."/>
            <person name="Hide W."/>
            <person name="Bult C."/>
            <person name="Grimmond S.M."/>
            <person name="Teasdale R.D."/>
            <person name="Liu E.T."/>
            <person name="Brusic V."/>
            <person name="Quackenbush J."/>
            <person name="Wahlestedt C."/>
            <person name="Mattick J.S."/>
            <person name="Hume D.A."/>
            <person name="Kai C."/>
            <person name="Sasaki D."/>
            <person name="Tomaru Y."/>
            <person name="Fukuda S."/>
            <person name="Kanamori-Katayama M."/>
            <person name="Suzuki M."/>
            <person name="Aoki J."/>
            <person name="Arakawa T."/>
            <person name="Iida J."/>
            <person name="Imamura K."/>
            <person name="Itoh M."/>
            <person name="Kato T."/>
            <person name="Kawaji H."/>
            <person name="Kawagashira N."/>
            <person name="Kawashima T."/>
            <person name="Kojima M."/>
            <person name="Kondo S."/>
            <person name="Konno H."/>
            <person name="Nakano K."/>
            <person name="Ninomiya N."/>
            <person name="Nishio T."/>
            <person name="Okada M."/>
            <person name="Plessy C."/>
            <person name="Shibata K."/>
            <person name="Shiraki T."/>
            <person name="Suzuki S."/>
            <person name="Tagami M."/>
            <person name="Waki K."/>
            <person name="Watahiki A."/>
            <person name="Okamura-Oho Y."/>
            <person name="Suzuki H."/>
            <person name="Kawai J."/>
            <person name="Hayashizaki Y."/>
        </authorList>
    </citation>
    <scope>NUCLEOTIDE SEQUENCE [LARGE SCALE MRNA]</scope>
    <source>
        <strain>C57BL/6J</strain>
        <tissue>Kidney</tissue>
    </source>
</reference>
<reference key="3">
    <citation type="submission" date="2000-06" db="EMBL/GenBank/DDBJ databases">
        <title>HEG1 (heart expressed gene) - a new marker gene for heart development in the mouse.</title>
        <authorList>
            <person name="Schepler A."/>
            <person name="Arnemann J."/>
        </authorList>
    </citation>
    <scope>NUCLEOTIDE SEQUENCE [MRNA]</scope>
    <source>
        <tissue>Heart</tissue>
    </source>
</reference>
<reference key="4">
    <citation type="journal article" date="2004" name="Genome Res.">
        <title>The status, quality, and expansion of the NIH full-length cDNA project: the Mammalian Gene Collection (MGC).</title>
        <authorList>
            <consortium name="The MGC Project Team"/>
        </authorList>
    </citation>
    <scope>NUCLEOTIDE SEQUENCE [LARGE SCALE MRNA]</scope>
    <source>
        <strain>C57BL/6J</strain>
        <tissue>Embryo</tissue>
    </source>
</reference>
<reference key="5">
    <citation type="journal article" date="2005" name="Cell">
        <title>The m-AAA protease defective in hereditary spastic paraplegia controls ribosome assembly in mitochondria.</title>
        <authorList>
            <person name="Nolden M."/>
            <person name="Ehses S."/>
            <person name="Koppen M."/>
            <person name="Bernacchia A."/>
            <person name="Rugarli E.I."/>
            <person name="Langer T."/>
        </authorList>
    </citation>
    <scope>PROTEOLYTIC CLEAVAGE</scope>
</reference>
<reference key="6">
    <citation type="journal article" date="2010" name="Cell">
        <title>A tissue-specific atlas of mouse protein phosphorylation and expression.</title>
        <authorList>
            <person name="Huttlin E.L."/>
            <person name="Jedrychowski M.P."/>
            <person name="Elias J.E."/>
            <person name="Goswami T."/>
            <person name="Rad R."/>
            <person name="Beausoleil S.A."/>
            <person name="Villen J."/>
            <person name="Haas W."/>
            <person name="Sowa M.E."/>
            <person name="Gygi S.P."/>
        </authorList>
    </citation>
    <scope>IDENTIFICATION BY MASS SPECTROMETRY [LARGE SCALE ANALYSIS]</scope>
    <source>
        <tissue>Heart</tissue>
        <tissue>Kidney</tissue>
        <tissue>Liver</tissue>
    </source>
</reference>
<protein>
    <recommendedName>
        <fullName evidence="5">Large ribosomal subunit protein bL32m</fullName>
    </recommendedName>
    <alternativeName>
        <fullName>39S ribosomal protein L32, mitochondrial</fullName>
        <shortName>L32mt</shortName>
        <shortName>MRP-L32</shortName>
    </alternativeName>
    <alternativeName>
        <fullName>Heart-expressed gene 1 protein</fullName>
    </alternativeName>
</protein>
<feature type="transit peptide" description="Mitochondrion" evidence="3">
    <location>
        <begin position="1"/>
        <end status="unknown"/>
    </location>
</feature>
<feature type="chain" id="PRO_0000030514" description="Large ribosomal subunit protein bL32m">
    <location>
        <begin status="unknown"/>
        <end position="187"/>
    </location>
</feature>
<feature type="binding site" evidence="2">
    <location>
        <position position="109"/>
    </location>
    <ligand>
        <name>Zn(2+)</name>
        <dbReference type="ChEBI" id="CHEBI:29105"/>
    </ligand>
</feature>
<feature type="binding site" evidence="2">
    <location>
        <position position="112"/>
    </location>
    <ligand>
        <name>Zn(2+)</name>
        <dbReference type="ChEBI" id="CHEBI:29105"/>
    </ligand>
</feature>
<feature type="binding site" evidence="2">
    <location>
        <position position="122"/>
    </location>
    <ligand>
        <name>Zn(2+)</name>
        <dbReference type="ChEBI" id="CHEBI:29105"/>
    </ligand>
</feature>
<feature type="binding site" evidence="2">
    <location>
        <position position="125"/>
    </location>
    <ligand>
        <name>Zn(2+)</name>
        <dbReference type="ChEBI" id="CHEBI:29105"/>
    </ligand>
</feature>
<feature type="sequence conflict" description="In Ref. 3; AAK69482." evidence="5" ref="3">
    <original>W</original>
    <variation>M</variation>
    <location>
        <position position="12"/>
    </location>
</feature>
<gene>
    <name type="primary">Mrpl32</name>
    <name type="synonym">Heg1</name>
</gene>
<organism>
    <name type="scientific">Mus musculus</name>
    <name type="common">Mouse</name>
    <dbReference type="NCBI Taxonomy" id="10090"/>
    <lineage>
        <taxon>Eukaryota</taxon>
        <taxon>Metazoa</taxon>
        <taxon>Chordata</taxon>
        <taxon>Craniata</taxon>
        <taxon>Vertebrata</taxon>
        <taxon>Euteleostomi</taxon>
        <taxon>Mammalia</taxon>
        <taxon>Eutheria</taxon>
        <taxon>Euarchontoglires</taxon>
        <taxon>Glires</taxon>
        <taxon>Rodentia</taxon>
        <taxon>Myomorpha</taxon>
        <taxon>Muroidea</taxon>
        <taxon>Muridae</taxon>
        <taxon>Murinae</taxon>
        <taxon>Mus</taxon>
        <taxon>Mus</taxon>
    </lineage>
</organism>
<accession>Q9DCI9</accession>
<accession>Q91XR6</accession>
<keyword id="KW-0479">Metal-binding</keyword>
<keyword id="KW-0496">Mitochondrion</keyword>
<keyword id="KW-1185">Reference proteome</keyword>
<keyword id="KW-0687">Ribonucleoprotein</keyword>
<keyword id="KW-0689">Ribosomal protein</keyword>
<keyword id="KW-0809">Transit peptide</keyword>
<keyword id="KW-0862">Zinc</keyword>